<evidence type="ECO:0000255" key="1">
    <source>
        <dbReference type="HAMAP-Rule" id="MF_00786"/>
    </source>
</evidence>
<reference key="1">
    <citation type="journal article" date="2009" name="Proc. Natl. Acad. Sci. U.S.A.">
        <title>Biogeography of the Sulfolobus islandicus pan-genome.</title>
        <authorList>
            <person name="Reno M.L."/>
            <person name="Held N.L."/>
            <person name="Fields C.J."/>
            <person name="Burke P.V."/>
            <person name="Whitaker R.J."/>
        </authorList>
    </citation>
    <scope>NUCLEOTIDE SEQUENCE [LARGE SCALE GENOMIC DNA]</scope>
    <source>
        <strain>M.14.25 / Kamchatka #1</strain>
    </source>
</reference>
<sequence>MEWKYVIPGIPDNFFERDEEIPMTKEEIRALALSKLRIRKGDMILDIGCGTGSVTVEASLLVGSTGKVYGVDKEEKAINLTRRNAEKFGVLNNIVLIKGEAPEILFTINEKFDRIFIGGGSEKIKEIISASWEIIKKGGRVVIDAILLETVNNAISAMENIGFMNLEITEVIIAKGMKTKVGTAMMTRNPIFIISGEKQ</sequence>
<dbReference type="EC" id="2.1.1.196" evidence="1"/>
<dbReference type="EMBL" id="CP001400">
    <property type="protein sequence ID" value="ACP37002.1"/>
    <property type="molecule type" value="Genomic_DNA"/>
</dbReference>
<dbReference type="RefSeq" id="WP_012710289.1">
    <property type="nucleotide sequence ID" value="NC_012588.1"/>
</dbReference>
<dbReference type="SMR" id="C3MTW8"/>
<dbReference type="GeneID" id="84060590"/>
<dbReference type="KEGG" id="sia:M1425_0110"/>
<dbReference type="HOGENOM" id="CLU_094143_0_0_2"/>
<dbReference type="UniPathway" id="UPA00148">
    <property type="reaction ID" value="UER00229"/>
</dbReference>
<dbReference type="Proteomes" id="UP000001350">
    <property type="component" value="Chromosome"/>
</dbReference>
<dbReference type="GO" id="GO:0043776">
    <property type="term" value="F:cobalt-precorrin-6B C5-methyltransferase activity"/>
    <property type="evidence" value="ECO:0007669"/>
    <property type="project" value="RHEA"/>
</dbReference>
<dbReference type="GO" id="GO:0008276">
    <property type="term" value="F:protein methyltransferase activity"/>
    <property type="evidence" value="ECO:0007669"/>
    <property type="project" value="InterPro"/>
</dbReference>
<dbReference type="GO" id="GO:0019251">
    <property type="term" value="P:anaerobic cobalamin biosynthetic process"/>
    <property type="evidence" value="ECO:0007669"/>
    <property type="project" value="UniProtKB-UniRule"/>
</dbReference>
<dbReference type="GO" id="GO:0032259">
    <property type="term" value="P:methylation"/>
    <property type="evidence" value="ECO:0007669"/>
    <property type="project" value="UniProtKB-KW"/>
</dbReference>
<dbReference type="CDD" id="cd02440">
    <property type="entry name" value="AdoMet_MTases"/>
    <property type="match status" value="1"/>
</dbReference>
<dbReference type="Gene3D" id="3.40.50.150">
    <property type="entry name" value="Vaccinia Virus protein VP39"/>
    <property type="match status" value="1"/>
</dbReference>
<dbReference type="HAMAP" id="MF_00786">
    <property type="entry name" value="CbiT"/>
    <property type="match status" value="1"/>
</dbReference>
<dbReference type="InterPro" id="IPR023475">
    <property type="entry name" value="CbiT"/>
</dbReference>
<dbReference type="InterPro" id="IPR014008">
    <property type="entry name" value="Cbl_synth_MTase_CbiT"/>
</dbReference>
<dbReference type="InterPro" id="IPR050714">
    <property type="entry name" value="Cobalamin_biosynth_MTase"/>
</dbReference>
<dbReference type="InterPro" id="IPR025714">
    <property type="entry name" value="Methyltranfer_dom"/>
</dbReference>
<dbReference type="InterPro" id="IPR029063">
    <property type="entry name" value="SAM-dependent_MTases_sf"/>
</dbReference>
<dbReference type="NCBIfam" id="TIGR02469">
    <property type="entry name" value="CbiT"/>
    <property type="match status" value="1"/>
</dbReference>
<dbReference type="NCBIfam" id="NF001556">
    <property type="entry name" value="PRK00377.1"/>
    <property type="match status" value="1"/>
</dbReference>
<dbReference type="PANTHER" id="PTHR43182">
    <property type="entry name" value="COBALT-PRECORRIN-6B C(15)-METHYLTRANSFERASE (DECARBOXYLATING)"/>
    <property type="match status" value="1"/>
</dbReference>
<dbReference type="PANTHER" id="PTHR43182:SF1">
    <property type="entry name" value="COBALT-PRECORRIN-7 C(5)-METHYLTRANSFERASE"/>
    <property type="match status" value="1"/>
</dbReference>
<dbReference type="Pfam" id="PF13847">
    <property type="entry name" value="Methyltransf_31"/>
    <property type="match status" value="1"/>
</dbReference>
<dbReference type="SUPFAM" id="SSF53335">
    <property type="entry name" value="S-adenosyl-L-methionine-dependent methyltransferases"/>
    <property type="match status" value="1"/>
</dbReference>
<proteinExistence type="inferred from homology"/>
<feature type="chain" id="PRO_1000212932" description="Probable cobalt-precorrin-6B C(15)-methyltransferase (decarboxylating)">
    <location>
        <begin position="1"/>
        <end position="199"/>
    </location>
</feature>
<feature type="binding site" evidence="1">
    <location>
        <position position="24"/>
    </location>
    <ligand>
        <name>S-adenosyl-L-methionine</name>
        <dbReference type="ChEBI" id="CHEBI:59789"/>
    </ligand>
</feature>
<feature type="binding site" evidence="1">
    <location>
        <begin position="48"/>
        <end position="52"/>
    </location>
    <ligand>
        <name>S-adenosyl-L-methionine</name>
        <dbReference type="ChEBI" id="CHEBI:59789"/>
    </ligand>
</feature>
<feature type="binding site" evidence="1">
    <location>
        <position position="72"/>
    </location>
    <ligand>
        <name>S-adenosyl-L-methionine</name>
        <dbReference type="ChEBI" id="CHEBI:59789"/>
    </ligand>
</feature>
<feature type="binding site" evidence="1">
    <location>
        <position position="101"/>
    </location>
    <ligand>
        <name>S-adenosyl-L-methionine</name>
        <dbReference type="ChEBI" id="CHEBI:59789"/>
    </ligand>
</feature>
<gene>
    <name evidence="1" type="primary">cbiT</name>
    <name type="ordered locus">M1425_0110</name>
</gene>
<organism>
    <name type="scientific">Saccharolobus islandicus (strain M.14.25 / Kamchatka #1)</name>
    <name type="common">Sulfolobus islandicus</name>
    <dbReference type="NCBI Taxonomy" id="427317"/>
    <lineage>
        <taxon>Archaea</taxon>
        <taxon>Thermoproteota</taxon>
        <taxon>Thermoprotei</taxon>
        <taxon>Sulfolobales</taxon>
        <taxon>Sulfolobaceae</taxon>
        <taxon>Saccharolobus</taxon>
    </lineage>
</organism>
<accession>C3MTW8</accession>
<protein>
    <recommendedName>
        <fullName evidence="1">Probable cobalt-precorrin-6B C(15)-methyltransferase (decarboxylating)</fullName>
        <ecNumber evidence="1">2.1.1.196</ecNumber>
    </recommendedName>
</protein>
<name>CBIT_SACI4</name>
<keyword id="KW-0169">Cobalamin biosynthesis</keyword>
<keyword id="KW-0489">Methyltransferase</keyword>
<keyword id="KW-0949">S-adenosyl-L-methionine</keyword>
<keyword id="KW-0808">Transferase</keyword>
<comment type="function">
    <text evidence="1">Catalyzes the methylation of C-15 in cobalt-precorrin-6B followed by the decarboxylation of C-12 to form cobalt-precorrin-7.</text>
</comment>
<comment type="catalytic activity">
    <reaction evidence="1">
        <text>Co-precorrin-6B + S-adenosyl-L-methionine = Co-precorrin-7 + S-adenosyl-L-homocysteine + CO2</text>
        <dbReference type="Rhea" id="RHEA:36067"/>
        <dbReference type="ChEBI" id="CHEBI:16526"/>
        <dbReference type="ChEBI" id="CHEBI:57856"/>
        <dbReference type="ChEBI" id="CHEBI:59789"/>
        <dbReference type="ChEBI" id="CHEBI:70791"/>
        <dbReference type="ChEBI" id="CHEBI:72780"/>
        <dbReference type="EC" id="2.1.1.196"/>
    </reaction>
</comment>
<comment type="pathway">
    <text evidence="1">Cofactor biosynthesis; adenosylcobalamin biosynthesis; cob(II)yrinate a,c-diamide from sirohydrochlorin (anaerobic route): step 8/10.</text>
</comment>
<comment type="similarity">
    <text evidence="1">Belongs to the methyltransferase superfamily. Archaeal-type CbiT family.</text>
</comment>